<sequence>MMLGPEGGEGYVVKLRGLPWSCSIEDVQNFLSDCTIHDGVAGVHFIYTREGRQSGEAFVELESEDDVKLALKKDRESMGHRYIEVFKSHRTEMDWVLKHSGPNSADSANDGFVRLRGLPFGCTKEEIVQFFSGLEIVPNGITLPVDPEGKITGEAFVQFASQELAEKALGKHKERIGHRYIEVFKSSQEEVRSYSDPPLKFMSVQRPGPYDRPGTARRYIGIVKQAGLDRMRSGAYSAGYGGYEEYSGLSDGYGFTTDLFGRDLSYCLSGMYDHRYGDSEFTVQSTTGHCVHMRGLPYKATENDIYNFFSPLNPVRVHIEIGPDGRVTGEADVEFATHEEAVAAMSKDRANMQHRYIELFLNSTTGASNGAYSSQVMQGMGVSAAQATYSGLESQSVSGCYGAGYSGQNSMGGYD</sequence>
<dbReference type="EMBL" id="AB022209">
    <property type="protein sequence ID" value="BAA37095.1"/>
    <property type="molecule type" value="mRNA"/>
</dbReference>
<dbReference type="EMBL" id="BC097275">
    <property type="protein sequence ID" value="AAH97275.1"/>
    <property type="molecule type" value="mRNA"/>
</dbReference>
<dbReference type="EMBL" id="BC103634">
    <property type="protein sequence ID" value="AAI03635.1"/>
    <property type="molecule type" value="mRNA"/>
</dbReference>
<dbReference type="RefSeq" id="NP_001032362.1">
    <property type="nucleotide sequence ID" value="NM_001037285.1"/>
</dbReference>
<dbReference type="RefSeq" id="NP_001032363.1">
    <property type="nucleotide sequence ID" value="NM_001037286.1"/>
</dbReference>
<dbReference type="RefSeq" id="NP_001032364.1">
    <property type="nucleotide sequence ID" value="NM_001037287.1"/>
</dbReference>
<dbReference type="RefSeq" id="NP_071792.1">
    <property type="nucleotide sequence ID" value="NM_022397.3"/>
</dbReference>
<dbReference type="RefSeq" id="XP_008761484.1">
    <property type="nucleotide sequence ID" value="XM_008763262.2"/>
</dbReference>
<dbReference type="RefSeq" id="XP_017448358.1">
    <property type="nucleotide sequence ID" value="XM_017592869.1"/>
</dbReference>
<dbReference type="RefSeq" id="XP_017448359.1">
    <property type="nucleotide sequence ID" value="XM_017592870.1"/>
</dbReference>
<dbReference type="RefSeq" id="XP_017448360.1">
    <property type="nucleotide sequence ID" value="XM_017592871.1"/>
</dbReference>
<dbReference type="RefSeq" id="XP_017448361.1">
    <property type="nucleotide sequence ID" value="XM_017592872.1"/>
</dbReference>
<dbReference type="RefSeq" id="XP_017448362.1">
    <property type="nucleotide sequence ID" value="XM_017592873.1"/>
</dbReference>
<dbReference type="RefSeq" id="XP_017448363.1">
    <property type="nucleotide sequence ID" value="XM_017592874.1"/>
</dbReference>
<dbReference type="RefSeq" id="XP_017448364.1">
    <property type="nucleotide sequence ID" value="XM_017592875.3"/>
</dbReference>
<dbReference type="RefSeq" id="XP_038964241.1">
    <property type="nucleotide sequence ID" value="XM_039108313.2"/>
</dbReference>
<dbReference type="RefSeq" id="XP_038964242.1">
    <property type="nucleotide sequence ID" value="XM_039108314.2"/>
</dbReference>
<dbReference type="RefSeq" id="XP_063142730.1">
    <property type="nucleotide sequence ID" value="XM_063286660.1"/>
</dbReference>
<dbReference type="SMR" id="Q794E4"/>
<dbReference type="BioGRID" id="249006">
    <property type="interactions" value="5"/>
</dbReference>
<dbReference type="FunCoup" id="Q794E4">
    <property type="interactions" value="4526"/>
</dbReference>
<dbReference type="IntAct" id="Q794E4">
    <property type="interactions" value="6"/>
</dbReference>
<dbReference type="MINT" id="Q794E4"/>
<dbReference type="STRING" id="10116.ENSRNOP00000069655"/>
<dbReference type="iPTMnet" id="Q794E4"/>
<dbReference type="PhosphoSitePlus" id="Q794E4"/>
<dbReference type="jPOST" id="Q794E4"/>
<dbReference type="PaxDb" id="10116-ENSRNOP00000019529"/>
<dbReference type="Ensembl" id="ENSRNOT00000019529.7">
    <property type="protein sequence ID" value="ENSRNOP00000019529.4"/>
    <property type="gene ID" value="ENSRNOG00000014562.7"/>
</dbReference>
<dbReference type="Ensembl" id="ENSRNOT00000083843.2">
    <property type="protein sequence ID" value="ENSRNOP00000068652.1"/>
    <property type="gene ID" value="ENSRNOG00000014562.7"/>
</dbReference>
<dbReference type="Ensembl" id="ENSRNOT00000091765.2">
    <property type="protein sequence ID" value="ENSRNOP00000069655.1"/>
    <property type="gene ID" value="ENSRNOG00000014562.7"/>
</dbReference>
<dbReference type="Ensembl" id="ENSRNOT00000108423.1">
    <property type="protein sequence ID" value="ENSRNOP00000081128.1"/>
    <property type="gene ID" value="ENSRNOG00000014562.7"/>
</dbReference>
<dbReference type="Ensembl" id="ENSRNOT00000108890.1">
    <property type="protein sequence ID" value="ENSRNOP00000087661.1"/>
    <property type="gene ID" value="ENSRNOG00000014562.7"/>
</dbReference>
<dbReference type="Ensembl" id="ENSRNOT00000112326.1">
    <property type="protein sequence ID" value="ENSRNOP00000079597.1"/>
    <property type="gene ID" value="ENSRNOG00000014562.7"/>
</dbReference>
<dbReference type="GeneID" id="64200"/>
<dbReference type="KEGG" id="rno:64200"/>
<dbReference type="UCSC" id="RGD:620366">
    <property type="organism name" value="rat"/>
</dbReference>
<dbReference type="AGR" id="RGD:620366"/>
<dbReference type="CTD" id="3185"/>
<dbReference type="RGD" id="620366">
    <property type="gene designation" value="Hnrnpf"/>
</dbReference>
<dbReference type="eggNOG" id="KOG4211">
    <property type="taxonomic scope" value="Eukaryota"/>
</dbReference>
<dbReference type="GeneTree" id="ENSGT00940000157838"/>
<dbReference type="InParanoid" id="Q794E4"/>
<dbReference type="OMA" id="YYNDEYE"/>
<dbReference type="OrthoDB" id="431068at2759"/>
<dbReference type="PhylomeDB" id="Q794E4"/>
<dbReference type="TreeFam" id="TF316157"/>
<dbReference type="Reactome" id="R-RNO-72163">
    <property type="pathway name" value="mRNA Splicing - Major Pathway"/>
</dbReference>
<dbReference type="Reactome" id="R-RNO-72203">
    <property type="pathway name" value="Processing of Capped Intron-Containing Pre-mRNA"/>
</dbReference>
<dbReference type="PRO" id="PR:Q794E4"/>
<dbReference type="Proteomes" id="UP000002494">
    <property type="component" value="Chromosome 4"/>
</dbReference>
<dbReference type="Bgee" id="ENSRNOG00000014562">
    <property type="expression patterns" value="Expressed in thymus and 19 other cell types or tissues"/>
</dbReference>
<dbReference type="GO" id="GO:0071013">
    <property type="term" value="C:catalytic step 2 spliceosome"/>
    <property type="evidence" value="ECO:0000266"/>
    <property type="project" value="RGD"/>
</dbReference>
<dbReference type="GO" id="GO:0005654">
    <property type="term" value="C:nucleoplasm"/>
    <property type="evidence" value="ECO:0000318"/>
    <property type="project" value="GO_Central"/>
</dbReference>
<dbReference type="GO" id="GO:1990904">
    <property type="term" value="C:ribonucleoprotein complex"/>
    <property type="evidence" value="ECO:0000318"/>
    <property type="project" value="GO_Central"/>
</dbReference>
<dbReference type="GO" id="GO:0045202">
    <property type="term" value="C:synapse"/>
    <property type="evidence" value="ECO:0000266"/>
    <property type="project" value="RGD"/>
</dbReference>
<dbReference type="GO" id="GO:0003723">
    <property type="term" value="F:RNA binding"/>
    <property type="evidence" value="ECO:0000318"/>
    <property type="project" value="GO_Central"/>
</dbReference>
<dbReference type="GO" id="GO:0003727">
    <property type="term" value="F:single-stranded RNA binding"/>
    <property type="evidence" value="ECO:0000250"/>
    <property type="project" value="UniProtKB"/>
</dbReference>
<dbReference type="GO" id="GO:0017025">
    <property type="term" value="F:TBP-class protein binding"/>
    <property type="evidence" value="ECO:0000353"/>
    <property type="project" value="RGD"/>
</dbReference>
<dbReference type="GO" id="GO:0006397">
    <property type="term" value="P:mRNA processing"/>
    <property type="evidence" value="ECO:0007669"/>
    <property type="project" value="UniProtKB-KW"/>
</dbReference>
<dbReference type="GO" id="GO:0043484">
    <property type="term" value="P:regulation of RNA splicing"/>
    <property type="evidence" value="ECO:0000250"/>
    <property type="project" value="UniProtKB"/>
</dbReference>
<dbReference type="GO" id="GO:0008380">
    <property type="term" value="P:RNA splicing"/>
    <property type="evidence" value="ECO:0007669"/>
    <property type="project" value="UniProtKB-KW"/>
</dbReference>
<dbReference type="CDD" id="cd12729">
    <property type="entry name" value="RRM1_hnRNPH_hnRNPH2_hnRNPF"/>
    <property type="match status" value="1"/>
</dbReference>
<dbReference type="CDD" id="cd12731">
    <property type="entry name" value="RRM2_hnRNPH_hnRNPH2_hnRNPF"/>
    <property type="match status" value="1"/>
</dbReference>
<dbReference type="CDD" id="cd12506">
    <property type="entry name" value="RRM3_hnRNPH_CRSF1_like"/>
    <property type="match status" value="1"/>
</dbReference>
<dbReference type="FunFam" id="3.30.70.330:FF:000071">
    <property type="entry name" value="heterogeneous nuclear ribonucleoprotein H isoform X1"/>
    <property type="match status" value="1"/>
</dbReference>
<dbReference type="FunFam" id="3.30.70.330:FF:000075">
    <property type="entry name" value="Heterogeneous nuclear ribonucleoprotein H1 (H)"/>
    <property type="match status" value="1"/>
</dbReference>
<dbReference type="FunFam" id="3.30.70.330:FF:000031">
    <property type="entry name" value="Heterogeneous nuclear ribonucleoprotein h3 isoform"/>
    <property type="match status" value="1"/>
</dbReference>
<dbReference type="Gene3D" id="3.30.70.330">
    <property type="match status" value="3"/>
</dbReference>
<dbReference type="InterPro" id="IPR050666">
    <property type="entry name" value="ESRP"/>
</dbReference>
<dbReference type="InterPro" id="IPR012677">
    <property type="entry name" value="Nucleotide-bd_a/b_plait_sf"/>
</dbReference>
<dbReference type="InterPro" id="IPR035979">
    <property type="entry name" value="RBD_domain_sf"/>
</dbReference>
<dbReference type="InterPro" id="IPR000504">
    <property type="entry name" value="RRM_dom"/>
</dbReference>
<dbReference type="InterPro" id="IPR012996">
    <property type="entry name" value="Znf_CHHC"/>
</dbReference>
<dbReference type="PANTHER" id="PTHR13976">
    <property type="entry name" value="HETEROGENEOUS NUCLEAR RIBONUCLEOPROTEIN-RELATED"/>
    <property type="match status" value="1"/>
</dbReference>
<dbReference type="Pfam" id="PF00076">
    <property type="entry name" value="RRM_1"/>
    <property type="match status" value="2"/>
</dbReference>
<dbReference type="Pfam" id="PF08080">
    <property type="entry name" value="zf-RNPHF"/>
    <property type="match status" value="1"/>
</dbReference>
<dbReference type="SMART" id="SM00360">
    <property type="entry name" value="RRM"/>
    <property type="match status" value="3"/>
</dbReference>
<dbReference type="SUPFAM" id="SSF54928">
    <property type="entry name" value="RNA-binding domain, RBD"/>
    <property type="match status" value="3"/>
</dbReference>
<dbReference type="PROSITE" id="PS50102">
    <property type="entry name" value="RRM"/>
    <property type="match status" value="3"/>
</dbReference>
<organism>
    <name type="scientific">Rattus norvegicus</name>
    <name type="common">Rat</name>
    <dbReference type="NCBI Taxonomy" id="10116"/>
    <lineage>
        <taxon>Eukaryota</taxon>
        <taxon>Metazoa</taxon>
        <taxon>Chordata</taxon>
        <taxon>Craniata</taxon>
        <taxon>Vertebrata</taxon>
        <taxon>Euteleostomi</taxon>
        <taxon>Mammalia</taxon>
        <taxon>Eutheria</taxon>
        <taxon>Euarchontoglires</taxon>
        <taxon>Glires</taxon>
        <taxon>Rodentia</taxon>
        <taxon>Myomorpha</taxon>
        <taxon>Muroidea</taxon>
        <taxon>Muridae</taxon>
        <taxon>Murinae</taxon>
        <taxon>Rattus</taxon>
    </lineage>
</organism>
<feature type="chain" id="PRO_0000253054" description="Heterogeneous nuclear ribonucleoprotein F">
    <location>
        <begin position="1"/>
        <end position="415"/>
    </location>
</feature>
<feature type="initiator methionine" description="Removed; alternate" evidence="2">
    <location>
        <position position="1"/>
    </location>
</feature>
<feature type="chain" id="PRO_0000367117" description="Heterogeneous nuclear ribonucleoprotein F, N-terminally processed">
    <location>
        <begin position="2"/>
        <end position="415"/>
    </location>
</feature>
<feature type="domain" description="RRM 1" evidence="4">
    <location>
        <begin position="11"/>
        <end position="90"/>
    </location>
</feature>
<feature type="domain" description="RRM 2" evidence="4">
    <location>
        <begin position="111"/>
        <end position="188"/>
    </location>
</feature>
<feature type="domain" description="RRM 3" evidence="4">
    <location>
        <begin position="289"/>
        <end position="366"/>
    </location>
</feature>
<feature type="region of interest" description="Interaction with RNA" evidence="1">
    <location>
        <begin position="81"/>
        <end position="86"/>
    </location>
</feature>
<feature type="region of interest" description="Interaction with RNA" evidence="1">
    <location>
        <begin position="179"/>
        <end position="184"/>
    </location>
</feature>
<feature type="region of interest" description="Interaction with RNA" evidence="1">
    <location>
        <begin position="355"/>
        <end position="360"/>
    </location>
</feature>
<feature type="site" description="Interaction with RNA" evidence="1">
    <location>
        <position position="16"/>
    </location>
</feature>
<feature type="site" description="Interaction with RNA" evidence="1">
    <location>
        <position position="20"/>
    </location>
</feature>
<feature type="site" description="Interaction with RNA" evidence="1">
    <location>
        <position position="52"/>
    </location>
</feature>
<feature type="site" description="Interaction with RNA" evidence="1">
    <location>
        <position position="75"/>
    </location>
</feature>
<feature type="site" description="Interaction with RNA" evidence="1">
    <location>
        <position position="116"/>
    </location>
</feature>
<feature type="site" description="Interaction with RNA" evidence="1">
    <location>
        <position position="120"/>
    </location>
</feature>
<feature type="site" description="Interaction with RNA" evidence="1">
    <location>
        <position position="150"/>
    </location>
</feature>
<feature type="site" description="Interaction with RNA" evidence="1">
    <location>
        <position position="173"/>
    </location>
</feature>
<feature type="site" description="Interaction with RNA" evidence="1">
    <location>
        <position position="294"/>
    </location>
</feature>
<feature type="site" description="Interaction with RNA" evidence="1">
    <location>
        <position position="298"/>
    </location>
</feature>
<feature type="site" description="Interaction with RNA" evidence="1">
    <location>
        <position position="326"/>
    </location>
</feature>
<feature type="site" description="Interaction with RNA" evidence="1">
    <location>
        <position position="349"/>
    </location>
</feature>
<feature type="modified residue" description="N-acetylmethionine" evidence="2">
    <location>
        <position position="1"/>
    </location>
</feature>
<feature type="modified residue" description="N-acetylmethionine; in Heterogeneous nuclear ribonucleoprotein F, N-terminally processed" evidence="2">
    <location>
        <position position="2"/>
    </location>
</feature>
<feature type="modified residue" description="Phosphoserine" evidence="6">
    <location>
        <position position="104"/>
    </location>
</feature>
<feature type="modified residue" description="Phosphoserine" evidence="2">
    <location>
        <position position="107"/>
    </location>
</feature>
<feature type="modified residue" description="Phosphoserine" evidence="2">
    <location>
        <position position="161"/>
    </location>
</feature>
<feature type="modified residue" description="Phosphoserine" evidence="2">
    <location>
        <position position="187"/>
    </location>
</feature>
<feature type="modified residue" description="Phosphoserine" evidence="2">
    <location>
        <position position="193"/>
    </location>
</feature>
<feature type="modified residue" description="Phosphoserine" evidence="6">
    <location>
        <position position="195"/>
    </location>
</feature>
<feature type="modified residue" description="N6-acetyllysine; alternate" evidence="3">
    <location>
        <position position="200"/>
    </location>
</feature>
<feature type="modified residue" description="Phosphothreonine" evidence="2">
    <location>
        <position position="215"/>
    </location>
</feature>
<feature type="modified residue" description="N6-acetyllysine; alternate" evidence="2">
    <location>
        <position position="224"/>
    </location>
</feature>
<feature type="modified residue" description="Phosphoserine" evidence="2">
    <location>
        <position position="265"/>
    </location>
</feature>
<feature type="cross-link" description="Glycyl lysine isopeptide (Lys-Gly) (interchain with G-Cter in SUMO)" evidence="1">
    <location>
        <position position="72"/>
    </location>
</feature>
<feature type="cross-link" description="Glycyl lysine isopeptide (Lys-Gly) (interchain with G-Cter in SUMO2)" evidence="2">
    <location>
        <position position="87"/>
    </location>
</feature>
<feature type="cross-link" description="Glycyl lysine isopeptide (Lys-Gly) (interchain with G-Cter in SUMO2)" evidence="2">
    <location>
        <position position="167"/>
    </location>
</feature>
<feature type="cross-link" description="Glycyl lysine isopeptide (Lys-Gly) (interchain with G-Cter in SUMO2)" evidence="2">
    <location>
        <position position="185"/>
    </location>
</feature>
<feature type="cross-link" description="Glycyl lysine isopeptide (Lys-Gly) (interchain with G-Cter in SUMO2); alternate" evidence="2">
    <location>
        <position position="200"/>
    </location>
</feature>
<feature type="cross-link" description="Glycyl lysine isopeptide (Lys-Gly) (interchain with G-Cter in SUMO2); alternate" evidence="2">
    <location>
        <position position="224"/>
    </location>
</feature>
<name>HNRPF_RAT</name>
<reference key="1">
    <citation type="journal article" date="1999" name="FEBS Lett.">
        <title>Association of the rat heterogeneous nuclear RNA-ribonucleoprotein F with TATA-binding protein.</title>
        <authorList>
            <person name="Yoshida T."/>
            <person name="Makino Y."/>
            <person name="Tamura T."/>
        </authorList>
    </citation>
    <scope>NUCLEOTIDE SEQUENCE [MRNA]</scope>
    <scope>PROTEIN SEQUENCE OF 208-216</scope>
    <scope>SUBCELLULAR LOCATION</scope>
    <scope>INTERACTION WITH TBP</scope>
    <scope>TISSUE SPECIFICITY</scope>
    <source>
        <tissue>Liver</tissue>
    </source>
</reference>
<reference key="2">
    <citation type="journal article" date="2004" name="Genome Res.">
        <title>The status, quality, and expansion of the NIH full-length cDNA project: the Mammalian Gene Collection (MGC).</title>
        <authorList>
            <consortium name="The MGC Project Team"/>
        </authorList>
    </citation>
    <scope>NUCLEOTIDE SEQUENCE [LARGE SCALE MRNA]</scope>
    <source>
        <tissue>Lung</tissue>
        <tissue>Placenta</tissue>
    </source>
</reference>
<reference key="3">
    <citation type="journal article" date="2012" name="Nat. Commun.">
        <title>Quantitative maps of protein phosphorylation sites across 14 different rat organs and tissues.</title>
        <authorList>
            <person name="Lundby A."/>
            <person name="Secher A."/>
            <person name="Lage K."/>
            <person name="Nordsborg N.B."/>
            <person name="Dmytriyev A."/>
            <person name="Lundby C."/>
            <person name="Olsen J.V."/>
        </authorList>
    </citation>
    <scope>PHOSPHORYLATION [LARGE SCALE ANALYSIS] AT SER-104 AND SER-195</scope>
    <scope>IDENTIFICATION BY MASS SPECTROMETRY [LARGE SCALE ANALYSIS]</scope>
</reference>
<keyword id="KW-0007">Acetylation</keyword>
<keyword id="KW-0903">Direct protein sequencing</keyword>
<keyword id="KW-1017">Isopeptide bond</keyword>
<keyword id="KW-0507">mRNA processing</keyword>
<keyword id="KW-0508">mRNA splicing</keyword>
<keyword id="KW-0539">Nucleus</keyword>
<keyword id="KW-0597">Phosphoprotein</keyword>
<keyword id="KW-1185">Reference proteome</keyword>
<keyword id="KW-0677">Repeat</keyword>
<keyword id="KW-0687">Ribonucleoprotein</keyword>
<keyword id="KW-0694">RNA-binding</keyword>
<keyword id="KW-0747">Spliceosome</keyword>
<keyword id="KW-0832">Ubl conjugation</keyword>
<accession>Q794E4</accession>
<protein>
    <recommendedName>
        <fullName>Heterogeneous nuclear ribonucleoprotein F</fullName>
        <shortName>hnRNP F</shortName>
    </recommendedName>
    <component>
        <recommendedName>
            <fullName>Heterogeneous nuclear ribonucleoprotein F, N-terminally processed</fullName>
        </recommendedName>
    </component>
</protein>
<evidence type="ECO:0000250" key="1"/>
<evidence type="ECO:0000250" key="2">
    <source>
        <dbReference type="UniProtKB" id="P52597"/>
    </source>
</evidence>
<evidence type="ECO:0000250" key="3">
    <source>
        <dbReference type="UniProtKB" id="Q9Z2X1"/>
    </source>
</evidence>
<evidence type="ECO:0000255" key="4">
    <source>
        <dbReference type="PROSITE-ProRule" id="PRU00176"/>
    </source>
</evidence>
<evidence type="ECO:0000269" key="5">
    <source>
    </source>
</evidence>
<evidence type="ECO:0007744" key="6">
    <source>
    </source>
</evidence>
<gene>
    <name type="primary">Hnrnpf</name>
    <name type="synonym">Hnrpf</name>
</gene>
<proteinExistence type="evidence at protein level"/>
<comment type="function">
    <text evidence="1">Component of the heterogeneous nuclear ribonucleoprotein (hnRNP) complexes which provide the substrate for the processing events that pre-mRNAs undergo before becoming functional, translatable mRNAs in the cytoplasm. Plays a role in the regulation of alternative splicing events. Binds G-rich sequences in pre-mRNAs and keeps target RNA in an unfolded state (By similarity).</text>
</comment>
<comment type="subunit">
    <text evidence="1">Identified in the spliceosome C complex. Interacts with AGO1, AGO2, TBP and TXNL4/DIM1 (By similarity).</text>
</comment>
<comment type="subcellular location">
    <subcellularLocation>
        <location evidence="5">Nucleus</location>
        <location evidence="5">Nucleoplasm</location>
    </subcellularLocation>
</comment>
<comment type="tissue specificity">
    <text evidence="5">Detected in liver, thymus, spleen and testis.</text>
</comment>
<comment type="domain">
    <text evidence="1">The N-terminal RRM domains are responsible for recognizing the G-tract of BCL-X RNA.</text>
</comment>
<comment type="PTM">
    <text evidence="1">Sumoylated.</text>
</comment>